<evidence type="ECO:0000250" key="1">
    <source>
        <dbReference type="UniProtKB" id="P63141"/>
    </source>
</evidence>
<evidence type="ECO:0000250" key="2">
    <source>
        <dbReference type="UniProtKB" id="P63142"/>
    </source>
</evidence>
<evidence type="ECO:0000250" key="3">
    <source>
        <dbReference type="UniProtKB" id="Q09081"/>
    </source>
</evidence>
<evidence type="ECO:0000255" key="4"/>
<evidence type="ECO:0000256" key="5">
    <source>
        <dbReference type="SAM" id="MobiDB-lite"/>
    </source>
</evidence>
<evidence type="ECO:0000269" key="6">
    <source>
    </source>
</evidence>
<evidence type="ECO:0000269" key="7">
    <source>
    </source>
</evidence>
<evidence type="ECO:0000269" key="8">
    <source>
    </source>
</evidence>
<evidence type="ECO:0000269" key="9">
    <source>
    </source>
</evidence>
<evidence type="ECO:0000269" key="10">
    <source>
    </source>
</evidence>
<evidence type="ECO:0000269" key="11">
    <source>
    </source>
</evidence>
<evidence type="ECO:0000269" key="12">
    <source>
    </source>
</evidence>
<evidence type="ECO:0000269" key="13">
    <source>
    </source>
</evidence>
<evidence type="ECO:0000269" key="14">
    <source>
    </source>
</evidence>
<evidence type="ECO:0000269" key="15">
    <source>
    </source>
</evidence>
<evidence type="ECO:0000269" key="16">
    <source>
    </source>
</evidence>
<evidence type="ECO:0000269" key="17">
    <source>
    </source>
</evidence>
<evidence type="ECO:0000269" key="18">
    <source>
    </source>
</evidence>
<evidence type="ECO:0000269" key="19">
    <source>
    </source>
</evidence>
<evidence type="ECO:0000269" key="20">
    <source>
    </source>
</evidence>
<evidence type="ECO:0000269" key="21">
    <source>
    </source>
</evidence>
<evidence type="ECO:0000269" key="22">
    <source>
    </source>
</evidence>
<evidence type="ECO:0000269" key="23">
    <source>
    </source>
</evidence>
<evidence type="ECO:0000303" key="24">
    <source>
    </source>
</evidence>
<evidence type="ECO:0000303" key="25">
    <source>
    </source>
</evidence>
<evidence type="ECO:0000305" key="26"/>
<evidence type="ECO:0000305" key="27">
    <source>
    </source>
</evidence>
<evidence type="ECO:0000312" key="28">
    <source>
        <dbReference type="EMBL" id="BAF82750.1"/>
    </source>
</evidence>
<keyword id="KW-0025">Alternative splicing</keyword>
<keyword id="KW-1268">Autism spectrum disorder</keyword>
<keyword id="KW-0965">Cell junction</keyword>
<keyword id="KW-1003">Cell membrane</keyword>
<keyword id="KW-0966">Cell projection</keyword>
<keyword id="KW-0225">Disease variant</keyword>
<keyword id="KW-0256">Endoplasmic reticulum</keyword>
<keyword id="KW-0887">Epilepsy</keyword>
<keyword id="KW-0325">Glycoprotein</keyword>
<keyword id="KW-0991">Intellectual disability</keyword>
<keyword id="KW-0407">Ion channel</keyword>
<keyword id="KW-0406">Ion transport</keyword>
<keyword id="KW-0449">Lipoprotein</keyword>
<keyword id="KW-0472">Membrane</keyword>
<keyword id="KW-0564">Palmitate</keyword>
<keyword id="KW-0597">Phosphoprotein</keyword>
<keyword id="KW-0630">Potassium</keyword>
<keyword id="KW-0631">Potassium channel</keyword>
<keyword id="KW-0633">Potassium transport</keyword>
<keyword id="KW-1267">Proteomics identification</keyword>
<keyword id="KW-1185">Reference proteome</keyword>
<keyword id="KW-0770">Synapse</keyword>
<keyword id="KW-0771">Synaptosome</keyword>
<keyword id="KW-0812">Transmembrane</keyword>
<keyword id="KW-1133">Transmembrane helix</keyword>
<keyword id="KW-0813">Transport</keyword>
<keyword id="KW-0851">Voltage-gated channel</keyword>
<feature type="chain" id="PRO_0000053972" description="Potassium voltage-gated channel subfamily A member 2">
    <location>
        <begin position="1"/>
        <end position="499"/>
    </location>
</feature>
<feature type="topological domain" description="Cytoplasmic" evidence="2">
    <location>
        <begin position="1"/>
        <end position="160"/>
    </location>
</feature>
<feature type="transmembrane region" description="Helical; Name=Segment S1" evidence="2">
    <location>
        <begin position="161"/>
        <end position="182"/>
    </location>
</feature>
<feature type="topological domain" description="Extracellular" evidence="2">
    <location>
        <begin position="183"/>
        <end position="221"/>
    </location>
</feature>
<feature type="transmembrane region" description="Helical; Name=Segment S2" evidence="2">
    <location>
        <begin position="222"/>
        <end position="243"/>
    </location>
</feature>
<feature type="topological domain" description="Cytoplasmic" evidence="2">
    <location>
        <begin position="244"/>
        <end position="254"/>
    </location>
</feature>
<feature type="transmembrane region" description="Helical; Name=Segment S3" evidence="2">
    <location>
        <begin position="255"/>
        <end position="275"/>
    </location>
</feature>
<feature type="topological domain" description="Extracellular" evidence="2">
    <location>
        <begin position="276"/>
        <end position="289"/>
    </location>
</feature>
<feature type="transmembrane region" description="Helical; Voltage-sensor; Name=Segment S4" evidence="2">
    <location>
        <begin position="290"/>
        <end position="310"/>
    </location>
</feature>
<feature type="topological domain" description="Cytoplasmic" evidence="2">
    <location>
        <begin position="311"/>
        <end position="325"/>
    </location>
</feature>
<feature type="transmembrane region" description="Helical; Name=Segment S5" evidence="2">
    <location>
        <begin position="326"/>
        <end position="347"/>
    </location>
</feature>
<feature type="topological domain" description="Extracellular" evidence="2">
    <location>
        <begin position="348"/>
        <end position="361"/>
    </location>
</feature>
<feature type="intramembrane region" description="Helical; Name=Pore helix" evidence="2">
    <location>
        <begin position="362"/>
        <end position="373"/>
    </location>
</feature>
<feature type="intramembrane region" evidence="2">
    <location>
        <begin position="374"/>
        <end position="381"/>
    </location>
</feature>
<feature type="topological domain" description="Extracellular" evidence="2">
    <location>
        <begin position="382"/>
        <end position="388"/>
    </location>
</feature>
<feature type="transmembrane region" description="Helical; Name=Segment S6" evidence="2">
    <location>
        <begin position="389"/>
        <end position="417"/>
    </location>
</feature>
<feature type="topological domain" description="Cytoplasmic" evidence="2">
    <location>
        <begin position="418"/>
        <end position="499"/>
    </location>
</feature>
<feature type="region of interest" description="Tetramerization domain" evidence="2">
    <location>
        <begin position="1"/>
        <end position="125"/>
    </location>
</feature>
<feature type="region of interest" description="Disordered" evidence="5">
    <location>
        <begin position="1"/>
        <end position="26"/>
    </location>
</feature>
<feature type="region of interest" description="S4-S5 linker" evidence="2">
    <location>
        <begin position="312"/>
        <end position="325"/>
    </location>
</feature>
<feature type="short sequence motif" description="Selectivity filter" evidence="2">
    <location>
        <begin position="374"/>
        <end position="379"/>
    </location>
</feature>
<feature type="short sequence motif" description="PDZ-binding" evidence="2">
    <location>
        <begin position="497"/>
        <end position="499"/>
    </location>
</feature>
<feature type="site" description="Important for normal, slow channel gating" evidence="2">
    <location>
        <position position="252"/>
    </location>
</feature>
<feature type="site" description="Important for binding with the scorpion mesomartoxin; when the scorpion mesomartoxin-rKv1.2/KCNA2 interaction is modeled, this residue is close to the 'Y-57' residue of the toxin" evidence="2">
    <location>
        <position position="381"/>
    </location>
</feature>
<feature type="modified residue" description="Phosphotyrosine" evidence="1">
    <location>
        <position position="429"/>
    </location>
</feature>
<feature type="modified residue" description="Phosphoserine" evidence="1">
    <location>
        <position position="434"/>
    </location>
</feature>
<feature type="modified residue" description="Phosphoserine" evidence="1">
    <location>
        <position position="440"/>
    </location>
</feature>
<feature type="modified residue" description="Phosphoserine" evidence="3">
    <location>
        <position position="441"/>
    </location>
</feature>
<feature type="modified residue" description="Phosphoserine" evidence="3">
    <location>
        <position position="449"/>
    </location>
</feature>
<feature type="modified residue" description="Phosphotyrosine" evidence="2">
    <location>
        <position position="458"/>
    </location>
</feature>
<feature type="modified residue" description="Phosphoserine" evidence="1">
    <location>
        <position position="468"/>
    </location>
</feature>
<feature type="lipid moiety-binding region" description="S-palmitoyl cysteine" evidence="4">
    <location>
        <position position="244"/>
    </location>
</feature>
<feature type="glycosylation site" description="N-linked (GlcNAc...) asparagine" evidence="4">
    <location>
        <position position="207"/>
    </location>
</feature>
<feature type="splice variant" id="VSP_043077" description="In isoform 2." evidence="24">
    <original>VRVFRIFKLSRHSKGLQILGQTLKASMRELGLLIFFLFIGVILFSSAVYFAEADERESQFPSIPDAFWWAVVSMTTVGYGDMVPTTIGGKIVGSLCAIAGVLTIALPVPVIVSNFNYFYHRETEGEEQAQYLQVTSCPKIPSSPDLKKSRSASTISKSDYMEIQEGVNNSNEDFREENLKTANCTLANTNYVNITKMLTDV</original>
    <variation>ERRPLQSQKSKRGRQHLNTSHDCTLGINLVAGMTVQWTRASGPDDRQTPAVTTLHRMY</variation>
    <location>
        <begin position="299"/>
        <end position="499"/>
    </location>
</feature>
<feature type="sequence variant" id="VAR_089556" description="In DEE32; uncertain significance; loss-of-function effect on channel activity; loss of localization to cell membrane." evidence="21">
    <original>F</original>
    <variation>S</variation>
    <location>
        <position position="233"/>
    </location>
</feature>
<feature type="sequence variant" id="VAR_085682" description="In DEE32; affects channel activity; mutant channels display voltage-dependent activation significantly shifted toward negative potentials compared to wild-type; no effect on channel sensitivity to 4-aminopyridine." evidence="20">
    <original>E</original>
    <variation>K</variation>
    <location>
        <position position="236"/>
    </location>
</feature>
<feature type="sequence variant" id="VAR_073704" description="In DEE32; dominant-negative mutation; loss of channel function; dbSNP:rs786205231." evidence="17">
    <original>I</original>
    <variation>T</variation>
    <location>
        <position position="263"/>
    </location>
</feature>
<feature type="sequence variant" id="VAR_073705" description="In DEE32; causes a gain of function; dbSNP:rs786205232." evidence="16 17">
    <original>R</original>
    <variation>Q</variation>
    <location>
        <position position="297"/>
    </location>
</feature>
<feature type="sequence variant" id="VAR_073706" description="In DEE32; causes a gain of function; dbSNP:rs876657390." evidence="17">
    <original>L</original>
    <variation>F</variation>
    <location>
        <position position="298"/>
    </location>
</feature>
<feature type="sequence variant" id="VAR_089557" description="In DEE32; uncertain significance; channels open faster and require less membrane depolarization to open resulting in a gain of function; exhibit a faster rate of inactivation onset at a more hyperpolarized membrane potential and slower recovery resulting in a loss of function; no effect on localization to cell membrane." evidence="19">
    <original>F</original>
    <variation>L</variation>
    <location>
        <position position="302"/>
    </location>
</feature>
<feature type="sequence variant" id="VAR_089558" description="In NIZIDS; uncertain significance; loss-of-function effect on channel activity; decreased localization to cell membrane." evidence="22">
    <original>H</original>
    <variation>R</variation>
    <location>
        <position position="310"/>
    </location>
</feature>
<feature type="sequence variant" id="VAR_089559" description="In DEE32; uncertain significance; gain-of-function effect on channel activity; increased trafficking to cell membrane." evidence="22">
    <original>H</original>
    <variation>Y</variation>
    <location>
        <position position="310"/>
    </location>
</feature>
<feature type="sequence variant" id="VAR_078206" description="Found in a patient with drug-resistant epilepsy; likely pathogenic." evidence="18">
    <original>S</original>
    <variation>T</variation>
    <location>
        <position position="324"/>
    </location>
</feature>
<feature type="sequence variant" id="VAR_073707" description="In DEE32; loss of channel function; dbSNP:rs876657389." evidence="17">
    <original>P</original>
    <variation>L</variation>
    <location>
        <position position="405"/>
    </location>
</feature>
<feature type="sequence conflict" description="In Ref. 2; BAF82750." evidence="26" ref="2">
    <original>I</original>
    <variation>V</variation>
    <location>
        <position position="230"/>
    </location>
</feature>
<proteinExistence type="evidence at protein level"/>
<protein>
    <recommendedName>
        <fullName>Potassium voltage-gated channel subfamily A member 2</fullName>
    </recommendedName>
    <alternativeName>
        <fullName>NGK1</fullName>
    </alternativeName>
    <alternativeName>
        <fullName evidence="25">Voltage-gated K(+) channel HuKIV</fullName>
    </alternativeName>
    <alternativeName>
        <fullName>Voltage-gated potassium channel HBK5</fullName>
    </alternativeName>
    <alternativeName>
        <fullName>Voltage-gated potassium channel subunit Kv1.2</fullName>
    </alternativeName>
</protein>
<name>KCNA2_HUMAN</name>
<dbReference type="EMBL" id="L02752">
    <property type="protein sequence ID" value="AAA36141.1"/>
    <property type="molecule type" value="mRNA"/>
</dbReference>
<dbReference type="EMBL" id="AK290061">
    <property type="protein sequence ID" value="BAF82750.1"/>
    <property type="molecule type" value="mRNA"/>
</dbReference>
<dbReference type="EMBL" id="AL365361">
    <property type="status" value="NOT_ANNOTATED_CDS"/>
    <property type="molecule type" value="Genomic_DNA"/>
</dbReference>
<dbReference type="EMBL" id="CH471122">
    <property type="protein sequence ID" value="EAW56455.1"/>
    <property type="molecule type" value="Genomic_DNA"/>
</dbReference>
<dbReference type="EMBL" id="CH471122">
    <property type="protein sequence ID" value="EAW56456.1"/>
    <property type="molecule type" value="Genomic_DNA"/>
</dbReference>
<dbReference type="EMBL" id="BC043564">
    <property type="protein sequence ID" value="AAH43564.1"/>
    <property type="molecule type" value="mRNA"/>
</dbReference>
<dbReference type="CCDS" id="CCDS55625.1">
    <molecule id="P16389-2"/>
</dbReference>
<dbReference type="CCDS" id="CCDS827.1">
    <molecule id="P16389-1"/>
</dbReference>
<dbReference type="PIR" id="I77466">
    <property type="entry name" value="I77466"/>
</dbReference>
<dbReference type="RefSeq" id="NP_001191198.1">
    <molecule id="P16389-2"/>
    <property type="nucleotide sequence ID" value="NM_001204269.2"/>
</dbReference>
<dbReference type="RefSeq" id="NP_004965.1">
    <molecule id="P16389-1"/>
    <property type="nucleotide sequence ID" value="NM_004974.4"/>
</dbReference>
<dbReference type="RefSeq" id="XP_011539698.1">
    <molecule id="P16389-1"/>
    <property type="nucleotide sequence ID" value="XM_011541396.3"/>
</dbReference>
<dbReference type="RefSeq" id="XP_011539699.1">
    <property type="nucleotide sequence ID" value="XM_011541397.2"/>
</dbReference>
<dbReference type="RefSeq" id="XP_011539700.1">
    <molecule id="P16389-1"/>
    <property type="nucleotide sequence ID" value="XM_011541398.3"/>
</dbReference>
<dbReference type="RefSeq" id="XP_011539701.1">
    <property type="nucleotide sequence ID" value="XM_011541399.2"/>
</dbReference>
<dbReference type="RefSeq" id="XP_011539702.1">
    <molecule id="P16389-1"/>
    <property type="nucleotide sequence ID" value="XM_011541400.3"/>
</dbReference>
<dbReference type="RefSeq" id="XP_016856702.1">
    <molecule id="P16389-1"/>
    <property type="nucleotide sequence ID" value="XM_017001213.2"/>
</dbReference>
<dbReference type="RefSeq" id="XP_054192404.1">
    <molecule id="P16389-1"/>
    <property type="nucleotide sequence ID" value="XM_054336429.1"/>
</dbReference>
<dbReference type="RefSeq" id="XP_054192405.1">
    <molecule id="P16389-1"/>
    <property type="nucleotide sequence ID" value="XM_054336430.1"/>
</dbReference>
<dbReference type="RefSeq" id="XP_054192406.1">
    <molecule id="P16389-1"/>
    <property type="nucleotide sequence ID" value="XM_054336431.1"/>
</dbReference>
<dbReference type="RefSeq" id="XP_054192407.1">
    <molecule id="P16389-1"/>
    <property type="nucleotide sequence ID" value="XM_054336432.1"/>
</dbReference>
<dbReference type="RefSeq" id="XP_054192408.1">
    <molecule id="P16389-1"/>
    <property type="nucleotide sequence ID" value="XM_054336433.1"/>
</dbReference>
<dbReference type="RefSeq" id="XP_054192409.1">
    <molecule id="P16389-1"/>
    <property type="nucleotide sequence ID" value="XM_054336434.1"/>
</dbReference>
<dbReference type="SMR" id="P16389"/>
<dbReference type="BioGRID" id="109940">
    <property type="interactions" value="119"/>
</dbReference>
<dbReference type="CORUM" id="P16389"/>
<dbReference type="FunCoup" id="P16389">
    <property type="interactions" value="191"/>
</dbReference>
<dbReference type="IntAct" id="P16389">
    <property type="interactions" value="101"/>
</dbReference>
<dbReference type="STRING" id="9606.ENSP00000487785"/>
<dbReference type="BindingDB" id="P16389"/>
<dbReference type="ChEMBL" id="CHEMBL2086"/>
<dbReference type="DrugBank" id="DB06637">
    <property type="generic name" value="Dalfampridine"/>
</dbReference>
<dbReference type="DrugBank" id="DB00228">
    <property type="generic name" value="Enflurane"/>
</dbReference>
<dbReference type="DrugBank" id="DB01110">
    <property type="generic name" value="Miconazole"/>
</dbReference>
<dbReference type="DrugBank" id="DB01069">
    <property type="generic name" value="Promethazine"/>
</dbReference>
<dbReference type="DrugCentral" id="P16389"/>
<dbReference type="GuidetoPHARMACOLOGY" id="539"/>
<dbReference type="TCDB" id="1.A.1.2.10">
    <property type="family name" value="the voltage-gated ion channel (vic) superfamily"/>
</dbReference>
<dbReference type="GlyCosmos" id="P16389">
    <property type="glycosylation" value="1 site, No reported glycans"/>
</dbReference>
<dbReference type="GlyGen" id="P16389">
    <property type="glycosylation" value="4 sites"/>
</dbReference>
<dbReference type="iPTMnet" id="P16389"/>
<dbReference type="PhosphoSitePlus" id="P16389"/>
<dbReference type="SwissPalm" id="P16389"/>
<dbReference type="BioMuta" id="KCNA2"/>
<dbReference type="DMDM" id="1345813"/>
<dbReference type="jPOST" id="P16389"/>
<dbReference type="MassIVE" id="P16389"/>
<dbReference type="PaxDb" id="9606-ENSP00000433109"/>
<dbReference type="PeptideAtlas" id="P16389"/>
<dbReference type="ProteomicsDB" id="53349">
    <molecule id="P16389-1"/>
</dbReference>
<dbReference type="ProteomicsDB" id="53350">
    <molecule id="P16389-2"/>
</dbReference>
<dbReference type="ABCD" id="P16389">
    <property type="antibodies" value="3 sequenced antibodies"/>
</dbReference>
<dbReference type="Antibodypedia" id="4539">
    <property type="antibodies" value="295 antibodies from 31 providers"/>
</dbReference>
<dbReference type="DNASU" id="3737"/>
<dbReference type="Ensembl" id="ENST00000316361.10">
    <molecule id="P16389-1"/>
    <property type="protein sequence ID" value="ENSP00000314520.4"/>
    <property type="gene ID" value="ENSG00000177301.16"/>
</dbReference>
<dbReference type="Ensembl" id="ENST00000369770.7">
    <molecule id="P16389-2"/>
    <property type="protein sequence ID" value="ENSP00000358785.3"/>
    <property type="gene ID" value="ENSG00000177301.16"/>
</dbReference>
<dbReference type="Ensembl" id="ENST00000485317.6">
    <molecule id="P16389-1"/>
    <property type="protein sequence ID" value="ENSP00000433109.1"/>
    <property type="gene ID" value="ENSG00000177301.16"/>
</dbReference>
<dbReference type="Ensembl" id="ENST00000633222.1">
    <molecule id="P16389-1"/>
    <property type="protein sequence ID" value="ENSP00000487785.1"/>
    <property type="gene ID" value="ENSG00000177301.16"/>
</dbReference>
<dbReference type="Ensembl" id="ENST00000638532.1">
    <molecule id="P16389-1"/>
    <property type="protein sequence ID" value="ENSP00000491613.1"/>
    <property type="gene ID" value="ENSG00000177301.16"/>
</dbReference>
<dbReference type="Ensembl" id="ENST00000638616.2">
    <molecule id="P16389-1"/>
    <property type="protein sequence ID" value="ENSP00000491977.1"/>
    <property type="gene ID" value="ENSG00000177301.16"/>
</dbReference>
<dbReference type="Ensembl" id="ENST00000675391.1">
    <molecule id="P16389-1"/>
    <property type="protein sequence ID" value="ENSP00000502642.1"/>
    <property type="gene ID" value="ENSG00000177301.16"/>
</dbReference>
<dbReference type="GeneID" id="3737"/>
<dbReference type="KEGG" id="hsa:3737"/>
<dbReference type="MANE-Select" id="ENST00000316361.10">
    <property type="protein sequence ID" value="ENSP00000314520.4"/>
    <property type="RefSeq nucleotide sequence ID" value="NM_004974.4"/>
    <property type="RefSeq protein sequence ID" value="NP_004965.1"/>
</dbReference>
<dbReference type="UCSC" id="uc009wfv.2">
    <molecule id="P16389-1"/>
    <property type="organism name" value="human"/>
</dbReference>
<dbReference type="AGR" id="HGNC:6220"/>
<dbReference type="CTD" id="3737"/>
<dbReference type="DisGeNET" id="3737"/>
<dbReference type="GeneCards" id="KCNA2"/>
<dbReference type="HGNC" id="HGNC:6220">
    <property type="gene designation" value="KCNA2"/>
</dbReference>
<dbReference type="HPA" id="ENSG00000177301">
    <property type="expression patterns" value="Group enriched (brain, retina)"/>
</dbReference>
<dbReference type="MalaCards" id="KCNA2"/>
<dbReference type="MIM" id="176262">
    <property type="type" value="gene"/>
</dbReference>
<dbReference type="MIM" id="616366">
    <property type="type" value="phenotype"/>
</dbReference>
<dbReference type="MIM" id="618872">
    <property type="type" value="phenotype"/>
</dbReference>
<dbReference type="neXtProt" id="NX_P16389"/>
<dbReference type="OpenTargets" id="ENSG00000177301"/>
<dbReference type="Orphanet" id="442835">
    <property type="disease" value="Non-specific early-onset epileptic encephalopathy"/>
</dbReference>
<dbReference type="PharmGKB" id="PA206"/>
<dbReference type="VEuPathDB" id="HostDB:ENSG00000177301"/>
<dbReference type="eggNOG" id="KOG1545">
    <property type="taxonomic scope" value="Eukaryota"/>
</dbReference>
<dbReference type="GeneTree" id="ENSGT00940000158688"/>
<dbReference type="InParanoid" id="P16389"/>
<dbReference type="OMA" id="RNDEDDM"/>
<dbReference type="OrthoDB" id="415460at2759"/>
<dbReference type="PAN-GO" id="P16389">
    <property type="GO annotations" value="7 GO annotations based on evolutionary models"/>
</dbReference>
<dbReference type="PhylomeDB" id="P16389"/>
<dbReference type="TreeFam" id="TF313103"/>
<dbReference type="PathwayCommons" id="P16389"/>
<dbReference type="Reactome" id="R-HSA-1296072">
    <property type="pathway name" value="Voltage gated Potassium channels"/>
</dbReference>
<dbReference type="SignaLink" id="P16389"/>
<dbReference type="BioGRID-ORCS" id="3737">
    <property type="hits" value="20 hits in 1155 CRISPR screens"/>
</dbReference>
<dbReference type="ChiTaRS" id="KCNA2">
    <property type="organism name" value="human"/>
</dbReference>
<dbReference type="GeneWiki" id="KCNA2"/>
<dbReference type="GenomeRNAi" id="3737"/>
<dbReference type="Pharos" id="P16389">
    <property type="development level" value="Tclin"/>
</dbReference>
<dbReference type="PRO" id="PR:P16389"/>
<dbReference type="Proteomes" id="UP000005640">
    <property type="component" value="Chromosome 1"/>
</dbReference>
<dbReference type="RNAct" id="P16389">
    <property type="molecule type" value="protein"/>
</dbReference>
<dbReference type="Bgee" id="ENSG00000177301">
    <property type="expression patterns" value="Expressed in Brodmann (1909) area 23 and 144 other cell types or tissues"/>
</dbReference>
<dbReference type="ExpressionAtlas" id="P16389">
    <property type="expression patterns" value="baseline and differential"/>
</dbReference>
<dbReference type="GO" id="GO:0030424">
    <property type="term" value="C:axon"/>
    <property type="evidence" value="ECO:0000250"/>
    <property type="project" value="UniProtKB"/>
</dbReference>
<dbReference type="GO" id="GO:0043194">
    <property type="term" value="C:axon initial segment"/>
    <property type="evidence" value="ECO:0007669"/>
    <property type="project" value="Ensembl"/>
</dbReference>
<dbReference type="GO" id="GO:0043679">
    <property type="term" value="C:axon terminus"/>
    <property type="evidence" value="ECO:0000250"/>
    <property type="project" value="UniProtKB"/>
</dbReference>
<dbReference type="GO" id="GO:0044305">
    <property type="term" value="C:calyx of Held"/>
    <property type="evidence" value="ECO:0007669"/>
    <property type="project" value="Ensembl"/>
</dbReference>
<dbReference type="GO" id="GO:0030425">
    <property type="term" value="C:dendrite"/>
    <property type="evidence" value="ECO:0000250"/>
    <property type="project" value="UniProtKB"/>
</dbReference>
<dbReference type="GO" id="GO:0005789">
    <property type="term" value="C:endoplasmic reticulum membrane"/>
    <property type="evidence" value="ECO:0007669"/>
    <property type="project" value="UniProtKB-SubCell"/>
</dbReference>
<dbReference type="GO" id="GO:0098978">
    <property type="term" value="C:glutamatergic synapse"/>
    <property type="evidence" value="ECO:0007669"/>
    <property type="project" value="Ensembl"/>
</dbReference>
<dbReference type="GO" id="GO:0044224">
    <property type="term" value="C:juxtaparanode region of axon"/>
    <property type="evidence" value="ECO:0000250"/>
    <property type="project" value="BHF-UCL"/>
</dbReference>
<dbReference type="GO" id="GO:0030027">
    <property type="term" value="C:lamellipodium"/>
    <property type="evidence" value="ECO:0000250"/>
    <property type="project" value="UniProtKB"/>
</dbReference>
<dbReference type="GO" id="GO:0031258">
    <property type="term" value="C:lamellipodium membrane"/>
    <property type="evidence" value="ECO:0007669"/>
    <property type="project" value="UniProtKB-SubCell"/>
</dbReference>
<dbReference type="GO" id="GO:0016020">
    <property type="term" value="C:membrane"/>
    <property type="evidence" value="ECO:0000318"/>
    <property type="project" value="GO_Central"/>
</dbReference>
<dbReference type="GO" id="GO:0032809">
    <property type="term" value="C:neuronal cell body membrane"/>
    <property type="evidence" value="ECO:0000250"/>
    <property type="project" value="UniProtKB"/>
</dbReference>
<dbReference type="GO" id="GO:0033010">
    <property type="term" value="C:paranodal junction"/>
    <property type="evidence" value="ECO:0007669"/>
    <property type="project" value="UniProtKB-SubCell"/>
</dbReference>
<dbReference type="GO" id="GO:0043204">
    <property type="term" value="C:perikaryon"/>
    <property type="evidence" value="ECO:0000250"/>
    <property type="project" value="UniProtKB"/>
</dbReference>
<dbReference type="GO" id="GO:0005886">
    <property type="term" value="C:plasma membrane"/>
    <property type="evidence" value="ECO:0000315"/>
    <property type="project" value="UniProtKB"/>
</dbReference>
<dbReference type="GO" id="GO:0045211">
    <property type="term" value="C:postsynaptic membrane"/>
    <property type="evidence" value="ECO:0007669"/>
    <property type="project" value="Ensembl"/>
</dbReference>
<dbReference type="GO" id="GO:0042734">
    <property type="term" value="C:presynaptic membrane"/>
    <property type="evidence" value="ECO:0007669"/>
    <property type="project" value="UniProtKB-SubCell"/>
</dbReference>
<dbReference type="GO" id="GO:0008076">
    <property type="term" value="C:voltage-gated potassium channel complex"/>
    <property type="evidence" value="ECO:0000314"/>
    <property type="project" value="UniProtKB"/>
</dbReference>
<dbReference type="GO" id="GO:0005251">
    <property type="term" value="F:delayed rectifier potassium channel activity"/>
    <property type="evidence" value="ECO:0000250"/>
    <property type="project" value="UniProtKB"/>
</dbReference>
<dbReference type="GO" id="GO:0019894">
    <property type="term" value="F:kinesin binding"/>
    <property type="evidence" value="ECO:0007669"/>
    <property type="project" value="Ensembl"/>
</dbReference>
<dbReference type="GO" id="GO:0015271">
    <property type="term" value="F:outward rectifier potassium channel activity"/>
    <property type="evidence" value="ECO:0007669"/>
    <property type="project" value="Ensembl"/>
</dbReference>
<dbReference type="GO" id="GO:0005267">
    <property type="term" value="F:potassium channel activity"/>
    <property type="evidence" value="ECO:0000304"/>
    <property type="project" value="ProtInc"/>
</dbReference>
<dbReference type="GO" id="GO:1905030">
    <property type="term" value="F:voltage-gated monoatomic ion channel activity involved in regulation of postsynaptic membrane potential"/>
    <property type="evidence" value="ECO:0007669"/>
    <property type="project" value="Ensembl"/>
</dbReference>
<dbReference type="GO" id="GO:0099508">
    <property type="term" value="F:voltage-gated monoatomic ion channel activity involved in regulation of presynaptic membrane potential"/>
    <property type="evidence" value="ECO:0007669"/>
    <property type="project" value="Ensembl"/>
</dbReference>
<dbReference type="GO" id="GO:0005249">
    <property type="term" value="F:voltage-gated potassium channel activity"/>
    <property type="evidence" value="ECO:0000314"/>
    <property type="project" value="UniProtKB"/>
</dbReference>
<dbReference type="GO" id="GO:0001508">
    <property type="term" value="P:action potential"/>
    <property type="evidence" value="ECO:0000318"/>
    <property type="project" value="GO_Central"/>
</dbReference>
<dbReference type="GO" id="GO:0021987">
    <property type="term" value="P:cerebral cortex development"/>
    <property type="evidence" value="ECO:0007669"/>
    <property type="project" value="Ensembl"/>
</dbReference>
<dbReference type="GO" id="GO:0022038">
    <property type="term" value="P:corpus callosum development"/>
    <property type="evidence" value="ECO:0007669"/>
    <property type="project" value="Ensembl"/>
</dbReference>
<dbReference type="GO" id="GO:0019228">
    <property type="term" value="P:neuronal action potential"/>
    <property type="evidence" value="ECO:0000250"/>
    <property type="project" value="UniProtKB"/>
</dbReference>
<dbReference type="GO" id="GO:0021633">
    <property type="term" value="P:optic nerve structural organization"/>
    <property type="evidence" value="ECO:0007669"/>
    <property type="project" value="Ensembl"/>
</dbReference>
<dbReference type="GO" id="GO:0097623">
    <property type="term" value="P:potassium ion export across plasma membrane"/>
    <property type="evidence" value="ECO:0007669"/>
    <property type="project" value="Ensembl"/>
</dbReference>
<dbReference type="GO" id="GO:0071805">
    <property type="term" value="P:potassium ion transmembrane transport"/>
    <property type="evidence" value="ECO:0000315"/>
    <property type="project" value="UniProtKB"/>
</dbReference>
<dbReference type="GO" id="GO:0006813">
    <property type="term" value="P:potassium ion transport"/>
    <property type="evidence" value="ECO:0000304"/>
    <property type="project" value="ProtInc"/>
</dbReference>
<dbReference type="GO" id="GO:0051260">
    <property type="term" value="P:protein homooligomerization"/>
    <property type="evidence" value="ECO:0007669"/>
    <property type="project" value="InterPro"/>
</dbReference>
<dbReference type="GO" id="GO:0045188">
    <property type="term" value="P:regulation of circadian sleep/wake cycle, non-REM sleep"/>
    <property type="evidence" value="ECO:0007669"/>
    <property type="project" value="Ensembl"/>
</dbReference>
<dbReference type="GO" id="GO:0014059">
    <property type="term" value="P:regulation of dopamine secretion"/>
    <property type="evidence" value="ECO:0000250"/>
    <property type="project" value="UniProtKB"/>
</dbReference>
<dbReference type="GO" id="GO:0019233">
    <property type="term" value="P:sensory perception of pain"/>
    <property type="evidence" value="ECO:0000250"/>
    <property type="project" value="UniProtKB"/>
</dbReference>
<dbReference type="FunFam" id="1.10.287.70:FF:000002">
    <property type="entry name" value="Potassium voltage-gated channel subfamily a member"/>
    <property type="match status" value="1"/>
</dbReference>
<dbReference type="FunFam" id="1.20.120.350:FF:000025">
    <property type="entry name" value="Potassium voltage-gated channel subfamily A member 2"/>
    <property type="match status" value="1"/>
</dbReference>
<dbReference type="FunFam" id="3.30.710.10:FF:000007">
    <property type="entry name" value="Potassium voltage-gated channel subfamily A member 2"/>
    <property type="match status" value="1"/>
</dbReference>
<dbReference type="Gene3D" id="1.10.287.70">
    <property type="match status" value="1"/>
</dbReference>
<dbReference type="Gene3D" id="3.30.710.10">
    <property type="entry name" value="Potassium Channel Kv1.1, Chain A"/>
    <property type="match status" value="1"/>
</dbReference>
<dbReference type="Gene3D" id="1.20.120.350">
    <property type="entry name" value="Voltage-gated potassium channels. Chain C"/>
    <property type="match status" value="1"/>
</dbReference>
<dbReference type="InterPro" id="IPR000210">
    <property type="entry name" value="BTB/POZ_dom"/>
</dbReference>
<dbReference type="InterPro" id="IPR005821">
    <property type="entry name" value="Ion_trans_dom"/>
</dbReference>
<dbReference type="InterPro" id="IPR003968">
    <property type="entry name" value="K_chnl_volt-dep_Kv"/>
</dbReference>
<dbReference type="InterPro" id="IPR003972">
    <property type="entry name" value="K_chnl_volt-dep_Kv1"/>
</dbReference>
<dbReference type="InterPro" id="IPR004049">
    <property type="entry name" value="K_chnl_volt-dep_Kv1.2"/>
</dbReference>
<dbReference type="InterPro" id="IPR011333">
    <property type="entry name" value="SKP1/BTB/POZ_sf"/>
</dbReference>
<dbReference type="InterPro" id="IPR003131">
    <property type="entry name" value="T1-type_BTB"/>
</dbReference>
<dbReference type="InterPro" id="IPR028325">
    <property type="entry name" value="VG_K_chnl"/>
</dbReference>
<dbReference type="InterPro" id="IPR027359">
    <property type="entry name" value="Volt_channel_dom_sf"/>
</dbReference>
<dbReference type="PANTHER" id="PTHR11537:SF23">
    <property type="entry name" value="POTASSIUM VOLTAGE-GATED CHANNEL SUBFAMILY A MEMBER 2"/>
    <property type="match status" value="1"/>
</dbReference>
<dbReference type="PANTHER" id="PTHR11537">
    <property type="entry name" value="VOLTAGE-GATED POTASSIUM CHANNEL"/>
    <property type="match status" value="1"/>
</dbReference>
<dbReference type="Pfam" id="PF02214">
    <property type="entry name" value="BTB_2"/>
    <property type="match status" value="1"/>
</dbReference>
<dbReference type="Pfam" id="PF00520">
    <property type="entry name" value="Ion_trans"/>
    <property type="match status" value="1"/>
</dbReference>
<dbReference type="PRINTS" id="PR00169">
    <property type="entry name" value="KCHANNEL"/>
</dbReference>
<dbReference type="PRINTS" id="PR01509">
    <property type="entry name" value="KV12CHANNEL"/>
</dbReference>
<dbReference type="PRINTS" id="PR01491">
    <property type="entry name" value="KVCHANNEL"/>
</dbReference>
<dbReference type="PRINTS" id="PR01496">
    <property type="entry name" value="SHAKERCHANEL"/>
</dbReference>
<dbReference type="SMART" id="SM00225">
    <property type="entry name" value="BTB"/>
    <property type="match status" value="1"/>
</dbReference>
<dbReference type="SUPFAM" id="SSF54695">
    <property type="entry name" value="POZ domain"/>
    <property type="match status" value="1"/>
</dbReference>
<dbReference type="SUPFAM" id="SSF81324">
    <property type="entry name" value="Voltage-gated potassium channels"/>
    <property type="match status" value="1"/>
</dbReference>
<accession>P16389</accession>
<accession>A0A024R0D3</accession>
<accession>A8K1Z6</accession>
<accession>Q86XG6</accession>
<organism>
    <name type="scientific">Homo sapiens</name>
    <name type="common">Human</name>
    <dbReference type="NCBI Taxonomy" id="9606"/>
    <lineage>
        <taxon>Eukaryota</taxon>
        <taxon>Metazoa</taxon>
        <taxon>Chordata</taxon>
        <taxon>Craniata</taxon>
        <taxon>Vertebrata</taxon>
        <taxon>Euteleostomi</taxon>
        <taxon>Mammalia</taxon>
        <taxon>Eutheria</taxon>
        <taxon>Euarchontoglires</taxon>
        <taxon>Primates</taxon>
        <taxon>Haplorrhini</taxon>
        <taxon>Catarrhini</taxon>
        <taxon>Hominidae</taxon>
        <taxon>Homo</taxon>
    </lineage>
</organism>
<comment type="function">
    <text evidence="1 2 8 11 12 14 19 21 22 23 26">Voltage-gated potassium channel that mediates transmembrane potassium transport in excitable membranes, primarily in the brain and the central nervous system, but also in the cardiovascular system. Prevents aberrant action potential firing and regulates neuronal output. Forms tetrameric potassium-selective channels through which potassium ions pass in accordance with their electrochemical gradient. The channel alternates between opened and closed conformations in response to the voltage difference across the membrane (PubMed:11211111, PubMed:19912772, PubMed:23769686, PubMed:8495559). Can form functional homotetrameric channels and heterotetrameric channels that contain variable proportions of KCNA1, KCNA2, KCNA4, KCNA5, KCNA6, KCNA7, and possibly other family members as well; channel properties depend on the type of alpha subunits that are part of the channel (PubMed:20220134, PubMed:8495559). Channel properties are modulated by cytoplasmic beta subunits that regulate the subcellular location of the alpha subunits and promote rapid inactivation of delayed rectifier potassium channels. In vivo, membranes probably contain a mixture of heteromeric potassium channel complexes, making it difficult to assign currents observed in intact tissues to any particular potassium channel family member. Homotetrameric KCNA2 forms a delayed-rectifier potassium channel that opens in response to membrane depolarization, followed by slow spontaneous channel closure (PubMed:19912772, PubMed:23769686). In contrast, a heteromultimer formed by KCNA2 and KCNA4 shows rapid inactivation (PubMed:8495559). Regulates neuronal excitability and plays a role as pacemaker in the regulation of neuronal action potentials (By similarity). KCNA2-containing channels play a presynaptic role and prevent hyperexcitability and aberrant action potential firing (By similarity). Response to toxins that are selective for KCNA2-containing potassium channels suggests that in Purkinje cells, dendritic subthreshold KCNA2-containing potassium channels prevent random spontaneous calcium spikes, suppressing dendritic hyperexcitability without hindering the generation of somatic action potentials, and thereby play an important role in motor coordination (By similarity). Plays a role in the induction of long-term potentiation of neuron excitability in the CA3 layer of the hippocampus (By similarity). May function as down-stream effector for G protein-coupled receptors and inhibit GABAergic inputs to basolateral amygdala neurons (By similarity). May contribute to the regulation of neurotransmitter release, such as gamma-aminobutyric acid (GABA) (By similarity). Contributes to the regulation of the axonal release of the neurotransmitter dopamine (By similarity). Reduced KCNA2 expression plays a role in the perception of neuropathic pain after peripheral nerve injury, but not acute pain (By similarity). Plays a role in the regulation of the time spent in non-rapid eye movement (NREM) sleep (By similarity).</text>
</comment>
<comment type="catalytic activity">
    <reaction evidence="8 11 12 14 19 21 22 23">
        <text>K(+)(in) = K(+)(out)</text>
        <dbReference type="Rhea" id="RHEA:29463"/>
        <dbReference type="ChEBI" id="CHEBI:29103"/>
    </reaction>
</comment>
<comment type="activity regulation">
    <text evidence="1 2 11 12">Inhibited by 4-aminopyridine (4-AP) and charybdotoxin (CTX), but not by tetraethylammonium (TEA) (PubMed:19912772). Inhibited by dendrotoxin (DTX) (By similarity). Inhibited by tityustoxin-K alpha (TsTX-Kalpha), a toxin that is highly specific for KCNA2 (By similarity). Inhibited by maurotoxin (By similarity). Inhibited by kappaM conotoxins kappaM-RIIIJ and kappaM-RIIIK; kappaM-RIIIJ has much higher affinity for channels containing KCNA2 than kappaM-RIIIK, with the exception of heterodimers formed by KCNA2 and KCNA7 where the opposite is true (PubMed:20220134).</text>
</comment>
<comment type="biophysicochemical properties">
    <kinetics>
        <text evidence="11">Homotetrameric channels activate rapidly, i.e within a few msec, but inactivation is very slow, with only a marginal decrease in conductance over several seconds. The voltage-dependence of activation and inactivation and other channel characteristics vary depending on the experimental conditions, the expression system, post-translational modifications and the presence or absence of ancillary subunits. For the activation of homotetrameric channels expressed in xenopus oocytes, the threshold is at about -30 mV and the midpoint at about -5 mV.</text>
    </kinetics>
</comment>
<comment type="subunit">
    <text evidence="1 2 3 6 7 10 15 21 23 26">Homotetramer and heterotetramer with other channel-forming alpha subunits, such as KCNA1, KCNA4, KCNA5, KCNA6 and KCNA7. Channel activity is regulated by interaction with the beta subunits, including KCNAB1 and KCNAB2. Identified in a complex with KCNA1 and KCNAB2 (PubMed:11086297). Identified in a complex with KCNA5 and KCNAB1 (By similarity). Identified in a complex with KCNA4 and FYN (By similarity). Interacts with the beta subunit KCNAB1 (PubMed:19713757). Interacts with PTK2B (By similarity). Interacts (via C-terminus) with CTTN (By similarity). Interacts (via N-terminal cytoplasmic domain) with RHOA (GTP-bound form); this regulates channel activity by reducing location at the cell surface in response to CHRM1 activation (By similarity). Interacts with DRD2 (By similarity). Interacts with SIGMAR1; cocaine consumption leads to increased interaction (By similarity). Interacts with ADAM22 (By similarity). Interacts (via C-terminus) with the PDZ domains of DLG1, DLG2 and DLG4 (By similarity). Interacts with CNTNAP2 (PubMed:10624965). Interacts with ADAM11 (By similarity). Interacts with LYNX1 (PubMed:24613312).</text>
</comment>
<comment type="interaction">
    <interactant intactId="EBI-10210559">
        <id>P16389</id>
    </interactant>
    <interactant intactId="EBI-1748958">
        <id>P49069</id>
        <label>CAMLG</label>
    </interactant>
    <organismsDiffer>false</organismsDiffer>
    <experiments>4</experiments>
</comment>
<comment type="interaction">
    <interactant intactId="EBI-10210559">
        <id>P16389</id>
    </interactant>
    <interactant intactId="EBI-948729">
        <id>Q13303</id>
        <label>KCNAB2</label>
    </interactant>
    <organismsDiffer>false</organismsDiffer>
    <experiments>3</experiments>
</comment>
<comment type="interaction">
    <interactant intactId="EBI-11987131">
        <id>P16389-2</id>
    </interactant>
    <interactant intactId="EBI-1748958">
        <id>P49069</id>
        <label>CAMLG</label>
    </interactant>
    <organismsDiffer>false</organismsDiffer>
    <experiments>3</experiments>
</comment>
<comment type="interaction">
    <interactant intactId="EBI-11987131">
        <id>P16389-2</id>
    </interactant>
    <interactant intactId="EBI-2876774">
        <id>Q92520</id>
        <label>FAM3C</label>
    </interactant>
    <organismsDiffer>false</organismsDiffer>
    <experiments>3</experiments>
</comment>
<comment type="subcellular location">
    <subcellularLocation>
        <location evidence="8 11 12 14 19 21 22 23">Cell membrane</location>
        <topology evidence="2 26">Multi-pass membrane protein</topology>
    </subcellularLocation>
    <subcellularLocation>
        <location evidence="2">Membrane</location>
    </subcellularLocation>
    <subcellularLocation>
        <location evidence="9">Cell projection</location>
        <location evidence="9">Axon</location>
    </subcellularLocation>
    <subcellularLocation>
        <location evidence="2">Synapse</location>
    </subcellularLocation>
    <subcellularLocation>
        <location evidence="2">Endoplasmic reticulum membrane</location>
    </subcellularLocation>
    <subcellularLocation>
        <location evidence="2">Cell projection</location>
        <location evidence="2">Lamellipodium membrane</location>
    </subcellularLocation>
    <subcellularLocation>
        <location evidence="1">Synapse</location>
        <location evidence="1">Synaptosome</location>
    </subcellularLocation>
    <subcellularLocation>
        <location evidence="1">Presynaptic cell membrane</location>
    </subcellularLocation>
    <subcellularLocation>
        <location evidence="1">Cell projection</location>
        <location evidence="1">Dendrite</location>
    </subcellularLocation>
    <subcellularLocation>
        <location evidence="1">Cell junction</location>
        <location evidence="1">Paranodal septate junction</location>
    </subcellularLocation>
    <text evidence="1 2">KCNA2 by itself is detected both at the endoplasmic reticulum and at the cell membrane. Coexpression with KCNA4 or with beta subunits promotes expression at the cell membrane. Coexpression with KCNA1 inhibits cell surface expression. In myelinated peripheral axons, clustered in the juxtaparadonal region and at an internodal line located along the mesaxon and below the Schmidt-Lanterman incisures (By similarity).</text>
</comment>
<comment type="alternative products">
    <event type="alternative splicing"/>
    <isoform>
        <id>P16389-1</id>
        <name>1</name>
        <sequence type="displayed"/>
    </isoform>
    <isoform>
        <id>P16389-2</id>
        <name>2</name>
        <sequence type="described" ref="VSP_043077"/>
    </isoform>
</comment>
<comment type="tissue specificity">
    <text evidence="7 9 13">Detected in brain cortex (PubMed:16473933). Detected in peroneal nerve in the juxtaparanodal regions of the node of Ranvier; expression is decreased in patients with diabetes mellitus that suffer from axonal neuropathy (PubMed:22649228). Detected in paranodal and juxtanodal zones in myelinated spinal cord (at protein level) (PubMed:11086297).</text>
</comment>
<comment type="domain">
    <text evidence="2">The cytoplasmic N-terminus is important for tetramerization. Interactions between the different subunits modulate the gating characteristics (By similarity). Besides, the cytoplasmic N-terminal domain mediates interaction with RHOA and thus is required for RHOA-mediated endocytosis (By similarity).</text>
</comment>
<comment type="domain">
    <text evidence="2">The transmembrane segment S4 functions as a voltage-sensor and is characterized by a series of positively charged amino acids at every third position. Channel opening and closing is effected by a conformation change that affects the position and orientation of the voltage-sensor paddle formed by S3 and S4 within the membrane. A transmembrane electric field that is positive inside would push the positively charged S4 segment outwards, thereby opening the pore, while a field that is negative inside would pull the S4 segment inwards and close the pore. Changes in the position and orientation of S4 are then transmitted to the activation gate formed by the inner helix bundle via the S4-S5 linker region.</text>
</comment>
<comment type="PTM">
    <text evidence="2">Phosphorylated on tyrosine residues; phosphorylation increases in response to ischemia (By similarity). Phosphorylated on tyrosine residues by activated PTK2B/PYK2 (By similarity). Phosphorylation on tyrosine residues suppresses ion channel activity (By similarity). Phosphorylated on tyrosine residues in response to CHRM1 activation; this abolishes interaction with CTTN. This is probably due to endocytosis of the phosphorylated channel subunits (By similarity). Phosphorylated on serine residues in response to increased cAMP levels; phosphorylation is apparently not catalyzed by PKA (By similarity).</text>
</comment>
<comment type="PTM">
    <text evidence="2">N-glycosylated, with complex, sialylated N-glycans.</text>
</comment>
<comment type="disease" evidence="16 17 19 20 21 22">
    <disease id="DI-04415">
        <name>Developmental and epileptic encephalopathy 32</name>
        <acronym>DEE32</acronym>
        <description>A form of epileptic encephalopathy, a heterogeneous group of severe early-onset epilepsies characterized by refractory seizures, neurodevelopmental impairment, and poor prognosis. Development is normal prior to seizure onset, after which cognitive and motor delays become apparent. DEE32 inheritance is autosomal dominant.</description>
        <dbReference type="MIM" id="616366"/>
    </disease>
    <text>The disease is caused by variants affecting the gene represented in this entry.</text>
</comment>
<comment type="disease" evidence="22">
    <disease id="DI-05831">
        <name>Nizon-Isidor syndrome</name>
        <acronym>NIZIDS</acronym>
        <description>An autosomal dominant neurodevelopmental disorder characterized by intellectual disability, global developmental delay, speech impairment, and behavioral abnormalities including autism spectrum disorder and aggressive behavior. Other features include a thin corpus callosum, and mild facial dysmorphism. Disease onset is in infancy or early childhood.</description>
        <dbReference type="MIM" id="618872"/>
    </disease>
    <text>The disease is caused by variants affecting the gene represented in this entry.</text>
</comment>
<comment type="miscellaneous">
    <text evidence="27">The delay or D-type current observed in hippocampus pyramidal neurons is probably mediated by potassium channels containing KCNA2 plus KCNA1 or other family members. It is activated at about -50 mV, i.e. below the action potential threshold, and is characterized by slow inactivation, extremely slow recovery from inactivation, sensitivity to dendrotoxin (DTX) and to 4-aminopyridine (4-AP).</text>
</comment>
<comment type="similarity">
    <text evidence="26">Belongs to the potassium channel family. A (Shaker) (TC 1.A.1.2) subfamily. Kv1.2/KCNA2 sub-subfamily.</text>
</comment>
<gene>
    <name type="primary">KCNA2</name>
</gene>
<reference key="1">
    <citation type="journal article" date="1990" name="Mol. Cell. Neurosci.">
        <title>Human potassium channel genes: molecular cloning and functional expression.</title>
        <authorList>
            <person name="Ramaswami M."/>
            <person name="Gautam M."/>
            <person name="Kamb A."/>
            <person name="Rudy B."/>
            <person name="Tanouye M.A."/>
            <person name="Mathew M.K."/>
        </authorList>
    </citation>
    <scope>NUCLEOTIDE SEQUENCE [MRNA] (ISOFORM 1)</scope>
    <scope>FUNCTION</scope>
    <scope>SUBCELLULAR LOCATION</scope>
    <scope>ACTIVITY REGULATION</scope>
    <scope>BIOPHYSICOCHEMICAL PROPERTIES</scope>
    <scope>TRANSPORTER ACTIVITY</scope>
    <source>
        <tissue>Brain</tissue>
    </source>
</reference>
<reference key="2">
    <citation type="journal article" date="2004" name="Nat. Genet.">
        <title>Complete sequencing and characterization of 21,243 full-length human cDNAs.</title>
        <authorList>
            <person name="Ota T."/>
            <person name="Suzuki Y."/>
            <person name="Nishikawa T."/>
            <person name="Otsuki T."/>
            <person name="Sugiyama T."/>
            <person name="Irie R."/>
            <person name="Wakamatsu A."/>
            <person name="Hayashi K."/>
            <person name="Sato H."/>
            <person name="Nagai K."/>
            <person name="Kimura K."/>
            <person name="Makita H."/>
            <person name="Sekine M."/>
            <person name="Obayashi M."/>
            <person name="Nishi T."/>
            <person name="Shibahara T."/>
            <person name="Tanaka T."/>
            <person name="Ishii S."/>
            <person name="Yamamoto J."/>
            <person name="Saito K."/>
            <person name="Kawai Y."/>
            <person name="Isono Y."/>
            <person name="Nakamura Y."/>
            <person name="Nagahari K."/>
            <person name="Murakami K."/>
            <person name="Yasuda T."/>
            <person name="Iwayanagi T."/>
            <person name="Wagatsuma M."/>
            <person name="Shiratori A."/>
            <person name="Sudo H."/>
            <person name="Hosoiri T."/>
            <person name="Kaku Y."/>
            <person name="Kodaira H."/>
            <person name="Kondo H."/>
            <person name="Sugawara M."/>
            <person name="Takahashi M."/>
            <person name="Kanda K."/>
            <person name="Yokoi T."/>
            <person name="Furuya T."/>
            <person name="Kikkawa E."/>
            <person name="Omura Y."/>
            <person name="Abe K."/>
            <person name="Kamihara K."/>
            <person name="Katsuta N."/>
            <person name="Sato K."/>
            <person name="Tanikawa M."/>
            <person name="Yamazaki M."/>
            <person name="Ninomiya K."/>
            <person name="Ishibashi T."/>
            <person name="Yamashita H."/>
            <person name="Murakawa K."/>
            <person name="Fujimori K."/>
            <person name="Tanai H."/>
            <person name="Kimata M."/>
            <person name="Watanabe M."/>
            <person name="Hiraoka S."/>
            <person name="Chiba Y."/>
            <person name="Ishida S."/>
            <person name="Ono Y."/>
            <person name="Takiguchi S."/>
            <person name="Watanabe S."/>
            <person name="Yosida M."/>
            <person name="Hotuta T."/>
            <person name="Kusano J."/>
            <person name="Kanehori K."/>
            <person name="Takahashi-Fujii A."/>
            <person name="Hara H."/>
            <person name="Tanase T.-O."/>
            <person name="Nomura Y."/>
            <person name="Togiya S."/>
            <person name="Komai F."/>
            <person name="Hara R."/>
            <person name="Takeuchi K."/>
            <person name="Arita M."/>
            <person name="Imose N."/>
            <person name="Musashino K."/>
            <person name="Yuuki H."/>
            <person name="Oshima A."/>
            <person name="Sasaki N."/>
            <person name="Aotsuka S."/>
            <person name="Yoshikawa Y."/>
            <person name="Matsunawa H."/>
            <person name="Ichihara T."/>
            <person name="Shiohata N."/>
            <person name="Sano S."/>
            <person name="Moriya S."/>
            <person name="Momiyama H."/>
            <person name="Satoh N."/>
            <person name="Takami S."/>
            <person name="Terashima Y."/>
            <person name="Suzuki O."/>
            <person name="Nakagawa S."/>
            <person name="Senoh A."/>
            <person name="Mizoguchi H."/>
            <person name="Goto Y."/>
            <person name="Shimizu F."/>
            <person name="Wakebe H."/>
            <person name="Hishigaki H."/>
            <person name="Watanabe T."/>
            <person name="Sugiyama A."/>
            <person name="Takemoto M."/>
            <person name="Kawakami B."/>
            <person name="Yamazaki M."/>
            <person name="Watanabe K."/>
            <person name="Kumagai A."/>
            <person name="Itakura S."/>
            <person name="Fukuzumi Y."/>
            <person name="Fujimori Y."/>
            <person name="Komiyama M."/>
            <person name="Tashiro H."/>
            <person name="Tanigami A."/>
            <person name="Fujiwara T."/>
            <person name="Ono T."/>
            <person name="Yamada K."/>
            <person name="Fujii Y."/>
            <person name="Ozaki K."/>
            <person name="Hirao M."/>
            <person name="Ohmori Y."/>
            <person name="Kawabata A."/>
            <person name="Hikiji T."/>
            <person name="Kobatake N."/>
            <person name="Inagaki H."/>
            <person name="Ikema Y."/>
            <person name="Okamoto S."/>
            <person name="Okitani R."/>
            <person name="Kawakami T."/>
            <person name="Noguchi S."/>
            <person name="Itoh T."/>
            <person name="Shigeta K."/>
            <person name="Senba T."/>
            <person name="Matsumura K."/>
            <person name="Nakajima Y."/>
            <person name="Mizuno T."/>
            <person name="Morinaga M."/>
            <person name="Sasaki M."/>
            <person name="Togashi T."/>
            <person name="Oyama M."/>
            <person name="Hata H."/>
            <person name="Watanabe M."/>
            <person name="Komatsu T."/>
            <person name="Mizushima-Sugano J."/>
            <person name="Satoh T."/>
            <person name="Shirai Y."/>
            <person name="Takahashi Y."/>
            <person name="Nakagawa K."/>
            <person name="Okumura K."/>
            <person name="Nagase T."/>
            <person name="Nomura N."/>
            <person name="Kikuchi H."/>
            <person name="Masuho Y."/>
            <person name="Yamashita R."/>
            <person name="Nakai K."/>
            <person name="Yada T."/>
            <person name="Nakamura Y."/>
            <person name="Ohara O."/>
            <person name="Isogai T."/>
            <person name="Sugano S."/>
        </authorList>
    </citation>
    <scope>NUCLEOTIDE SEQUENCE [LARGE SCALE MRNA]</scope>
    <source>
        <tissue evidence="28">Substantia nigra</tissue>
    </source>
</reference>
<reference key="3">
    <citation type="journal article" date="2006" name="Nature">
        <title>The DNA sequence and biological annotation of human chromosome 1.</title>
        <authorList>
            <person name="Gregory S.G."/>
            <person name="Barlow K.F."/>
            <person name="McLay K.E."/>
            <person name="Kaul R."/>
            <person name="Swarbreck D."/>
            <person name="Dunham A."/>
            <person name="Scott C.E."/>
            <person name="Howe K.L."/>
            <person name="Woodfine K."/>
            <person name="Spencer C.C.A."/>
            <person name="Jones M.C."/>
            <person name="Gillson C."/>
            <person name="Searle S."/>
            <person name="Zhou Y."/>
            <person name="Kokocinski F."/>
            <person name="McDonald L."/>
            <person name="Evans R."/>
            <person name="Phillips K."/>
            <person name="Atkinson A."/>
            <person name="Cooper R."/>
            <person name="Jones C."/>
            <person name="Hall R.E."/>
            <person name="Andrews T.D."/>
            <person name="Lloyd C."/>
            <person name="Ainscough R."/>
            <person name="Almeida J.P."/>
            <person name="Ambrose K.D."/>
            <person name="Anderson F."/>
            <person name="Andrew R.W."/>
            <person name="Ashwell R.I.S."/>
            <person name="Aubin K."/>
            <person name="Babbage A.K."/>
            <person name="Bagguley C.L."/>
            <person name="Bailey J."/>
            <person name="Beasley H."/>
            <person name="Bethel G."/>
            <person name="Bird C.P."/>
            <person name="Bray-Allen S."/>
            <person name="Brown J.Y."/>
            <person name="Brown A.J."/>
            <person name="Buckley D."/>
            <person name="Burton J."/>
            <person name="Bye J."/>
            <person name="Carder C."/>
            <person name="Chapman J.C."/>
            <person name="Clark S.Y."/>
            <person name="Clarke G."/>
            <person name="Clee C."/>
            <person name="Cobley V."/>
            <person name="Collier R.E."/>
            <person name="Corby N."/>
            <person name="Coville G.J."/>
            <person name="Davies J."/>
            <person name="Deadman R."/>
            <person name="Dunn M."/>
            <person name="Earthrowl M."/>
            <person name="Ellington A.G."/>
            <person name="Errington H."/>
            <person name="Frankish A."/>
            <person name="Frankland J."/>
            <person name="French L."/>
            <person name="Garner P."/>
            <person name="Garnett J."/>
            <person name="Gay L."/>
            <person name="Ghori M.R.J."/>
            <person name="Gibson R."/>
            <person name="Gilby L.M."/>
            <person name="Gillett W."/>
            <person name="Glithero R.J."/>
            <person name="Grafham D.V."/>
            <person name="Griffiths C."/>
            <person name="Griffiths-Jones S."/>
            <person name="Grocock R."/>
            <person name="Hammond S."/>
            <person name="Harrison E.S.I."/>
            <person name="Hart E."/>
            <person name="Haugen E."/>
            <person name="Heath P.D."/>
            <person name="Holmes S."/>
            <person name="Holt K."/>
            <person name="Howden P.J."/>
            <person name="Hunt A.R."/>
            <person name="Hunt S.E."/>
            <person name="Hunter G."/>
            <person name="Isherwood J."/>
            <person name="James R."/>
            <person name="Johnson C."/>
            <person name="Johnson D."/>
            <person name="Joy A."/>
            <person name="Kay M."/>
            <person name="Kershaw J.K."/>
            <person name="Kibukawa M."/>
            <person name="Kimberley A.M."/>
            <person name="King A."/>
            <person name="Knights A.J."/>
            <person name="Lad H."/>
            <person name="Laird G."/>
            <person name="Lawlor S."/>
            <person name="Leongamornlert D.A."/>
            <person name="Lloyd D.M."/>
            <person name="Loveland J."/>
            <person name="Lovell J."/>
            <person name="Lush M.J."/>
            <person name="Lyne R."/>
            <person name="Martin S."/>
            <person name="Mashreghi-Mohammadi M."/>
            <person name="Matthews L."/>
            <person name="Matthews N.S.W."/>
            <person name="McLaren S."/>
            <person name="Milne S."/>
            <person name="Mistry S."/>
            <person name="Moore M.J.F."/>
            <person name="Nickerson T."/>
            <person name="O'Dell C.N."/>
            <person name="Oliver K."/>
            <person name="Palmeiri A."/>
            <person name="Palmer S.A."/>
            <person name="Parker A."/>
            <person name="Patel D."/>
            <person name="Pearce A.V."/>
            <person name="Peck A.I."/>
            <person name="Pelan S."/>
            <person name="Phelps K."/>
            <person name="Phillimore B.J."/>
            <person name="Plumb R."/>
            <person name="Rajan J."/>
            <person name="Raymond C."/>
            <person name="Rouse G."/>
            <person name="Saenphimmachak C."/>
            <person name="Sehra H.K."/>
            <person name="Sheridan E."/>
            <person name="Shownkeen R."/>
            <person name="Sims S."/>
            <person name="Skuce C.D."/>
            <person name="Smith M."/>
            <person name="Steward C."/>
            <person name="Subramanian S."/>
            <person name="Sycamore N."/>
            <person name="Tracey A."/>
            <person name="Tromans A."/>
            <person name="Van Helmond Z."/>
            <person name="Wall M."/>
            <person name="Wallis J.M."/>
            <person name="White S."/>
            <person name="Whitehead S.L."/>
            <person name="Wilkinson J.E."/>
            <person name="Willey D.L."/>
            <person name="Williams H."/>
            <person name="Wilming L."/>
            <person name="Wray P.W."/>
            <person name="Wu Z."/>
            <person name="Coulson A."/>
            <person name="Vaudin M."/>
            <person name="Sulston J.E."/>
            <person name="Durbin R.M."/>
            <person name="Hubbard T."/>
            <person name="Wooster R."/>
            <person name="Dunham I."/>
            <person name="Carter N.P."/>
            <person name="McVean G."/>
            <person name="Ross M.T."/>
            <person name="Harrow J."/>
            <person name="Olson M.V."/>
            <person name="Beck S."/>
            <person name="Rogers J."/>
            <person name="Bentley D.R."/>
        </authorList>
    </citation>
    <scope>NUCLEOTIDE SEQUENCE [LARGE SCALE GENOMIC DNA]</scope>
</reference>
<reference key="4">
    <citation type="submission" date="2005-07" db="EMBL/GenBank/DDBJ databases">
        <authorList>
            <person name="Mural R.J."/>
            <person name="Istrail S."/>
            <person name="Sutton G.G."/>
            <person name="Florea L."/>
            <person name="Halpern A.L."/>
            <person name="Mobarry C.M."/>
            <person name="Lippert R."/>
            <person name="Walenz B."/>
            <person name="Shatkay H."/>
            <person name="Dew I."/>
            <person name="Miller J.R."/>
            <person name="Flanigan M.J."/>
            <person name="Edwards N.J."/>
            <person name="Bolanos R."/>
            <person name="Fasulo D."/>
            <person name="Halldorsson B.V."/>
            <person name="Hannenhalli S."/>
            <person name="Turner R."/>
            <person name="Yooseph S."/>
            <person name="Lu F."/>
            <person name="Nusskern D.R."/>
            <person name="Shue B.C."/>
            <person name="Zheng X.H."/>
            <person name="Zhong F."/>
            <person name="Delcher A.L."/>
            <person name="Huson D.H."/>
            <person name="Kravitz S.A."/>
            <person name="Mouchard L."/>
            <person name="Reinert K."/>
            <person name="Remington K.A."/>
            <person name="Clark A.G."/>
            <person name="Waterman M.S."/>
            <person name="Eichler E.E."/>
            <person name="Adams M.D."/>
            <person name="Hunkapiller M.W."/>
            <person name="Myers E.W."/>
            <person name="Venter J.C."/>
        </authorList>
    </citation>
    <scope>NUCLEOTIDE SEQUENCE [LARGE SCALE GENOMIC DNA]</scope>
</reference>
<reference key="5">
    <citation type="journal article" date="2004" name="Genome Res.">
        <title>The status, quality, and expansion of the NIH full-length cDNA project: the Mammalian Gene Collection (MGC).</title>
        <authorList>
            <consortium name="The MGC Project Team"/>
        </authorList>
    </citation>
    <scope>NUCLEOTIDE SEQUENCE [LARGE SCALE MRNA] (ISOFORM 2)</scope>
    <source>
        <tissue>Blood</tissue>
    </source>
</reference>
<reference key="6">
    <citation type="journal article" date="1993" name="Circ. Res.">
        <title>Heteromultimeric assembly of human potassium channels. Molecular basis of a transient outward current?</title>
        <authorList>
            <person name="Po S."/>
            <person name="Roberds S."/>
            <person name="Snyders D.J."/>
            <person name="Tamkun M.M."/>
            <person name="Bennett P.B."/>
        </authorList>
    </citation>
    <scope>FUNCTION</scope>
    <scope>SUBCELLULAR LOCATION</scope>
    <scope>SUBUNIT</scope>
    <scope>INTERACTION WITH KCNA4</scope>
    <scope>TRANSPORTER ACTIVITY</scope>
</reference>
<reference key="7">
    <citation type="journal article" date="1999" name="Neuron">
        <title>Caspr2, a new member of the neurexin superfamily, is localized at the juxtaparanodes of myelinated axons and associates with K+ channels.</title>
        <authorList>
            <person name="Poliak S."/>
            <person name="Gollan L."/>
            <person name="Martinez R."/>
            <person name="Custer A."/>
            <person name="Einheber S."/>
            <person name="Salzer J.L."/>
            <person name="Trimmer J.S."/>
            <person name="Shrager P."/>
            <person name="Peles E."/>
        </authorList>
    </citation>
    <scope>INTERACTION WITH CNTNAP2</scope>
</reference>
<reference key="8">
    <citation type="journal article" date="2000" name="Pflugers Arch.">
        <title>Role of receptor protein tyrosine phosphatase alpha (RPTPalpha) and tyrosine phosphorylation in the serotonergic inhibition of voltage-dependent potassium channels.</title>
        <authorList>
            <person name="Imbrici P."/>
            <person name="Tucker S.J."/>
            <person name="D'Adamo M.C."/>
            <person name="Pessia M."/>
        </authorList>
    </citation>
    <scope>FUNCTION</scope>
    <scope>SUBCELLULAR LOCATION</scope>
    <scope>TRANSPORTER ACTIVITY</scope>
</reference>
<reference key="9">
    <citation type="journal article" date="2001" name="J. Comp. Neurol.">
        <title>Subunit composition and novel localization of K+ channels in spinal cord.</title>
        <authorList>
            <person name="Rasband M.N."/>
            <person name="Trimmer J.S."/>
        </authorList>
    </citation>
    <scope>SUBCELLULAR LOCATION</scope>
    <scope>INTERACTION WITH KCNA1 AND KCNAB2</scope>
    <scope>SUBUNIT</scope>
    <scope>TISSUE SPECIFICITY</scope>
</reference>
<reference key="10">
    <citation type="journal article" date="2006" name="Proc. Natl. Acad. Sci. U.S.A.">
        <title>Voltage-gated ion channels in the axon initial segment of human cortical pyramidal cells and their relationship with chandelier cells.</title>
        <authorList>
            <person name="Inda M.C."/>
            <person name="DeFelipe J."/>
            <person name="Munoz A."/>
        </authorList>
    </citation>
    <scope>SUBCELLULAR LOCATION</scope>
    <scope>TISSUE SPECIFICITY</scope>
</reference>
<reference key="11">
    <citation type="journal article" date="2007" name="Mol. Neurobiol.">
        <title>Ionic channel function in action potential generation: current perspective.</title>
        <authorList>
            <person name="Baranauskas G."/>
        </authorList>
    </citation>
    <scope>REVIEW</scope>
</reference>
<reference key="12">
    <citation type="journal article" date="2009" name="Channels">
        <title>The molecular basis for the actions of Kvbeta1.2 on the opening and closing of the Kv1.2 delayed rectifier channel.</title>
        <authorList>
            <person name="Peters C.J."/>
            <person name="Vaid M."/>
            <person name="Horne A.J."/>
            <person name="Fedida D."/>
            <person name="Accili E.A."/>
        </authorList>
    </citation>
    <scope>INTERACTION WITH KCNAB1</scope>
</reference>
<reference key="13">
    <citation type="journal article" date="2010" name="J. Biol. Chem.">
        <title>Biochemical characterization of kappaM-RIIIJ, a Kv1.2 channel blocker: evaluation of cardioprotective effects of kappaM-conotoxins.</title>
        <authorList>
            <person name="Chen P."/>
            <person name="Dendorfer A."/>
            <person name="Finol-Urdaneta R.K."/>
            <person name="Terlau H."/>
            <person name="Olivera B.M."/>
        </authorList>
    </citation>
    <scope>FUNCTION</scope>
    <scope>SUBCELLULAR LOCATION</scope>
    <scope>SUBUNIT</scope>
    <scope>ACTIVITY REGULATION</scope>
    <scope>TRANSPORTER ACTIVITY</scope>
</reference>
<reference key="14">
    <citation type="journal article" date="2012" name="J. Neurosci.">
        <title>Altered distribution of juxtaparanodal kv1.2 subunits mediates peripheral nerve hyperexcitability in type 2 diabetes mellitus.</title>
        <authorList>
            <person name="Zenker J."/>
            <person name="Poirot O."/>
            <person name="de Preux Charles A.S."/>
            <person name="Arnaud E."/>
            <person name="Medard J.J."/>
            <person name="Lacroix C."/>
            <person name="Kuntzer T."/>
            <person name="Chrast R."/>
        </authorList>
    </citation>
    <scope>TISSUE SPECIFICITY</scope>
</reference>
<reference key="15">
    <citation type="journal article" date="2013" name="Neurosci. Lett.">
        <title>Activation of lysophosphatidic acid receptor by gintonin inhibits Kv1.2 channel activity: involvement of tyrosine kinase and receptor protein tyrosine phosphatase alpha.</title>
        <authorList>
            <person name="Lee J.H."/>
            <person name="Choi S.H."/>
            <person name="Lee B.H."/>
            <person name="Hwang S.H."/>
            <person name="Kim H.J."/>
            <person name="Rhee J."/>
            <person name="Chung C."/>
            <person name="Nah S.Y."/>
        </authorList>
    </citation>
    <scope>FUNCTION</scope>
    <scope>SUBCELLULAR LOCATION</scope>
    <scope>TRANSPORTER ACTIVITY</scope>
</reference>
<reference key="16">
    <citation type="journal article" date="2014" name="Curr. Biol.">
        <title>SLEEPLESS is a bifunctional regulator of excitability and cholinergic synaptic transmission.</title>
        <authorList>
            <person name="Wu M."/>
            <person name="Robinson J.E."/>
            <person name="Joiner W.J."/>
        </authorList>
    </citation>
    <scope>INTERACTION WITH LYNX1</scope>
</reference>
<reference key="17">
    <citation type="journal article" date="2015" name="Clin. Genet.">
        <title>Ataxia and myoclonic epilepsy due to a heterozygous new mutation in KCNA2: proposal for a new channelopathy.</title>
        <authorList>
            <person name="Pena S.D."/>
            <person name="Coimbra R.L."/>
        </authorList>
    </citation>
    <scope>INVOLVEMENT IN DEE32</scope>
    <scope>VARIANT DEE32 GLN-297</scope>
</reference>
<reference key="18">
    <citation type="journal article" date="2015" name="Nat. Genet.">
        <title>De novo loss- or gain-of-function mutations in KCNA2 cause epileptic encephalopathy.</title>
        <authorList>
            <person name="Syrbe S."/>
            <person name="Hedrich U.B."/>
            <person name="Riesch E."/>
            <person name="Djemie T."/>
            <person name="Mueller S."/>
            <person name="Moeller R.S."/>
            <person name="Maher B."/>
            <person name="Hernandez-Hernandez L."/>
            <person name="Synofzik M."/>
            <person name="Caglayan H.S."/>
            <person name="Arslan M."/>
            <person name="Serratosa J.M."/>
            <person name="Nothnagel M."/>
            <person name="May P."/>
            <person name="Krause R."/>
            <person name="Loeffler H."/>
            <person name="Detert K."/>
            <person name="Dorn T."/>
            <person name="Vogt H."/>
            <person name="Kraemer G."/>
            <person name="Schoels L."/>
            <person name="Mullis P.E."/>
            <person name="Linnankivi T."/>
            <person name="Lehesjoki A.E."/>
            <person name="Sterbova K."/>
            <person name="Craiu D.C."/>
            <person name="Hoffman-Zacharska D."/>
            <person name="Korff C.M."/>
            <person name="Weber Y.G."/>
            <person name="Steinlin M."/>
            <person name="Gallati S."/>
            <person name="Bertsche A."/>
            <person name="Bernhard M.K."/>
            <person name="Merkenschlager A."/>
            <person name="Kiess W."/>
            <person name="Gonzalez M."/>
            <person name="Zuechner S."/>
            <person name="Palotie A."/>
            <person name="Suls A."/>
            <person name="De Jonghe P."/>
            <person name="Helbig I."/>
            <person name="Biskup S."/>
            <person name="Wolff M."/>
            <person name="Maljevic S."/>
            <person name="Schuele R."/>
            <person name="Sisodiya S.M."/>
            <person name="Weckhuysen S."/>
            <person name="Lerche H."/>
            <person name="Lemke J.R."/>
        </authorList>
    </citation>
    <scope>INVOLVEMENT IN DEE32</scope>
    <scope>VARIANTS DEE32 THR-263; GLN-297; PHE-298 AND LEU-405</scope>
    <scope>CHARACTERIZATION OF VARIANTS DEE32 THR-263; GLN-297; PHE-298 AND LEU-405</scope>
</reference>
<reference key="19">
    <citation type="journal article" date="2017" name="Hum. Mutat.">
        <title>Diagnostic targeted resequencing in 349 patients with drug-resistant pediatric epilepsies identifies causative mutations in 30 different genes.</title>
        <authorList>
            <consortium name="Clinical Study Group"/>
            <person name="Parrini E."/>
            <person name="Marini C."/>
            <person name="Mei D."/>
            <person name="Galuppi A."/>
            <person name="Cellini E."/>
            <person name="Pucatti D."/>
            <person name="Chiti L."/>
            <person name="Rutigliano D."/>
            <person name="Bianchini C."/>
            <person name="Virdo S."/>
            <person name="De Vita D."/>
            <person name="Bigoni S."/>
            <person name="Barba C."/>
            <person name="Mari F."/>
            <person name="Montomoli M."/>
            <person name="Pisano T."/>
            <person name="Rosati A."/>
            <person name="Guerrini R."/>
        </authorList>
    </citation>
    <scope>VARIANT THR-324</scope>
</reference>
<reference key="20">
    <citation type="journal article" date="2020" name="J. Physiol. (Lond.)">
        <title>Tracking the motion of the KV1.2 voltage sensor reveals the molecular perturbations caused by a de novo mutation in a case of epilepsy.</title>
        <authorList>
            <person name="Pantazis A."/>
            <person name="Kaneko M."/>
            <person name="Angelini M."/>
            <person name="Steccanella F."/>
            <person name="Westerlund A.M."/>
            <person name="Lindstroem S.H."/>
            <person name="Nilsson M."/>
            <person name="Delemotte L."/>
            <person name="Saitta S.C."/>
            <person name="Olcese R."/>
        </authorList>
    </citation>
    <scope>VARIANT DEE32 LEU-302</scope>
    <scope>CHARACTERIZATION OF VARIANT DEE32 LEU-302</scope>
    <scope>FUNCTION</scope>
    <scope>TRANSPORTER ACTIVITY</scope>
    <scope>SUBCELLULAR LOCATION</scope>
</reference>
<reference key="21">
    <citation type="journal article" date="2021" name="Int. J. Mol. Sci.">
        <title>A novel KCNA2 variant in a patient with non-progressive congenital ataxia and epilepsy: functional characterization and sensitivity to 4-aminopyridine.</title>
        <authorList>
            <person name="Imbrici P."/>
            <person name="Conte E."/>
            <person name="Blunck R."/>
            <person name="Stregapede F."/>
            <person name="Liantonio A."/>
            <person name="Tosi M."/>
            <person name="D'Adamo M.C."/>
            <person name="De Luca A."/>
            <person name="Brankovic V."/>
            <person name="Zanni G."/>
        </authorList>
    </citation>
    <scope>VARIANT DEE32 LYS-236</scope>
    <scope>CHARACTERIZATION OF VARIANT DEE32 LYS-236</scope>
</reference>
<reference key="22">
    <citation type="journal article" date="2022" name="Proc. Natl. Acad. Sci. U.S.A.">
        <title>An epilepsy-associated KV1.2 charge-transfer-center mutation impairs KV1.2 and KV1.4 trafficking.</title>
        <authorList>
            <person name="Nilsson M."/>
            <person name="Lindstroem S.H."/>
            <person name="Kaneko M."/>
            <person name="Wang K."/>
            <person name="Minguez-Vinas T."/>
            <person name="Angelini M."/>
            <person name="Steccanella F."/>
            <person name="Holder D."/>
            <person name="Ottolia M."/>
            <person name="Olcese R."/>
            <person name="Pantazis A."/>
        </authorList>
    </citation>
    <scope>VARIANT DEE32 SER-233</scope>
    <scope>CHARACTERIZATION OF VARIANT DEE32 SER-233</scope>
    <scope>FUNCTION</scope>
    <scope>TRANSPORTER ACTIVITY</scope>
    <scope>SUBUNIT</scope>
    <scope>SUBCELLULAR LOCATION</scope>
</reference>
<reference key="23">
    <citation type="journal article" date="2023" name="J. Physiol. (Lond.)">
        <title>Two epilepsy-associated variants in KCNA2 (KV 1.2) at position H310 oppositely affect channel functional expression.</title>
        <authorList>
            <person name="Minguez-Vinas T."/>
            <person name="Prakash V."/>
            <person name="Wang K."/>
            <person name="Lindstroem S.H."/>
            <person name="Pozzi S."/>
            <person name="Scott S.A."/>
            <person name="Spiteri E."/>
            <person name="Stevenson D.A."/>
            <person name="Ashley E.A."/>
            <person name="Gunnarsson C."/>
            <person name="Pantazis A."/>
        </authorList>
    </citation>
    <scope>VARIANT DEE32 TYR-310</scope>
    <scope>VARIANT NIZIDS ARG-310</scope>
    <scope>CHARACTERIZATION OF VARIANT DEE32 TYR-310</scope>
    <scope>CHARACTERIZATION OF VARIANT NIZIDS ARG-310</scope>
    <scope>FUNCTION</scope>
    <scope>TRANSPORTER ACTIVITY</scope>
    <scope>SUBCELLULAR LOCATION</scope>
</reference>
<sequence length="499" mass="56717">MTVATGDPADEAAALPGHPQDTYDPEADHECCERVVINISGLRFETQLKTLAQFPETLLGDPKKRMRYFDPLRNEYFFDRNRPSFDAILYYYQSGGRLRRPVNVPLDIFSEEIRFYELGEEAMEMFREDEGYIKEEERPLPENEFQRQVWLLFEYPESSGPARIIAIVSVMVILISIVSFCLETLPIFRDENEDMHGSGVTFHTYSNSTIGYQQSTSFTDPFFIVETLCIIWFSFEFLVRFFACPSKAGFFTNIMNIIDIVAIIPYFITLGTELAEKPEDAQQGQQAMSLAILRVIRLVRVFRIFKLSRHSKGLQILGQTLKASMRELGLLIFFLFIGVILFSSAVYFAEADERESQFPSIPDAFWWAVVSMTTVGYGDMVPTTIGGKIVGSLCAIAGVLTIALPVPVIVSNFNYFYHRETEGEEQAQYLQVTSCPKIPSSPDLKKSRSASTISKSDYMEIQEGVNNSNEDFREENLKTANCTLANTNYVNITKMLTDV</sequence>